<comment type="function">
    <text evidence="1">Binds directly to 23S rRNA. The L1 stalk is quite mobile in the ribosome, and is involved in E site tRNA release.</text>
</comment>
<comment type="function">
    <text evidence="1">Protein L1 is also a translational repressor protein, it controls the translation of the L11 operon by binding to its mRNA.</text>
</comment>
<comment type="subunit">
    <text evidence="1">Part of the 50S ribosomal subunit.</text>
</comment>
<comment type="similarity">
    <text evidence="1">Belongs to the universal ribosomal protein uL1 family.</text>
</comment>
<reference key="1">
    <citation type="journal article" date="2003" name="Nature">
        <title>Genome divergence in two Prochlorococcus ecotypes reflects oceanic niche differentiation.</title>
        <authorList>
            <person name="Rocap G."/>
            <person name="Larimer F.W."/>
            <person name="Lamerdin J.E."/>
            <person name="Malfatti S."/>
            <person name="Chain P."/>
            <person name="Ahlgren N.A."/>
            <person name="Arellano A."/>
            <person name="Coleman M."/>
            <person name="Hauser L."/>
            <person name="Hess W.R."/>
            <person name="Johnson Z.I."/>
            <person name="Land M.L."/>
            <person name="Lindell D."/>
            <person name="Post A.F."/>
            <person name="Regala W."/>
            <person name="Shah M."/>
            <person name="Shaw S.L."/>
            <person name="Steglich C."/>
            <person name="Sullivan M.B."/>
            <person name="Ting C.S."/>
            <person name="Tolonen A."/>
            <person name="Webb E.A."/>
            <person name="Zinser E.R."/>
            <person name="Chisholm S.W."/>
        </authorList>
    </citation>
    <scope>NUCLEOTIDE SEQUENCE [LARGE SCALE GENOMIC DNA]</scope>
    <source>
        <strain>MIT 9313</strain>
    </source>
</reference>
<gene>
    <name evidence="1" type="primary">rplA</name>
    <name evidence="1" type="synonym">rpl1</name>
    <name type="ordered locus">PMT_2089</name>
</gene>
<feature type="chain" id="PRO_0000125711" description="Large ribosomal subunit protein uL1">
    <location>
        <begin position="1"/>
        <end position="235"/>
    </location>
</feature>
<keyword id="KW-1185">Reference proteome</keyword>
<keyword id="KW-0678">Repressor</keyword>
<keyword id="KW-0687">Ribonucleoprotein</keyword>
<keyword id="KW-0689">Ribosomal protein</keyword>
<keyword id="KW-0694">RNA-binding</keyword>
<keyword id="KW-0699">rRNA-binding</keyword>
<keyword id="KW-0810">Translation regulation</keyword>
<keyword id="KW-0820">tRNA-binding</keyword>
<sequence>MPKLSKRITGLLAKVEDRVYQPLEAIQLVKENATAKFDETIEAHVRLGIDPKYTDQQLRTTVALPQGTGQSVRIAVISRGEKLAEAKTAGAELAGDDDLVESIGKGQMDFDLLIATPDMMPKVAKLGRVLGPRGLMPNPKAGTVTTDLAAAIKEFKAGKLEFRADRAGIVHVRFGKASFSADALLENLKTLQETIDRNKPSGAKGRYWKSLYITSTMGPSVEVDVTALQDLEEDA</sequence>
<name>RL1_PROMM</name>
<proteinExistence type="inferred from homology"/>
<evidence type="ECO:0000255" key="1">
    <source>
        <dbReference type="HAMAP-Rule" id="MF_01318"/>
    </source>
</evidence>
<evidence type="ECO:0000305" key="2"/>
<dbReference type="EMBL" id="BX548175">
    <property type="protein sequence ID" value="CAE22263.1"/>
    <property type="molecule type" value="Genomic_DNA"/>
</dbReference>
<dbReference type="RefSeq" id="WP_011131453.1">
    <property type="nucleotide sequence ID" value="NC_005071.1"/>
</dbReference>
<dbReference type="SMR" id="Q7V478"/>
<dbReference type="KEGG" id="pmt:PMT_2089"/>
<dbReference type="eggNOG" id="COG0081">
    <property type="taxonomic scope" value="Bacteria"/>
</dbReference>
<dbReference type="HOGENOM" id="CLU_062853_0_0_3"/>
<dbReference type="OrthoDB" id="9803740at2"/>
<dbReference type="Proteomes" id="UP000001423">
    <property type="component" value="Chromosome"/>
</dbReference>
<dbReference type="GO" id="GO:0015934">
    <property type="term" value="C:large ribosomal subunit"/>
    <property type="evidence" value="ECO:0007669"/>
    <property type="project" value="InterPro"/>
</dbReference>
<dbReference type="GO" id="GO:0019843">
    <property type="term" value="F:rRNA binding"/>
    <property type="evidence" value="ECO:0007669"/>
    <property type="project" value="UniProtKB-UniRule"/>
</dbReference>
<dbReference type="GO" id="GO:0003735">
    <property type="term" value="F:structural constituent of ribosome"/>
    <property type="evidence" value="ECO:0007669"/>
    <property type="project" value="InterPro"/>
</dbReference>
<dbReference type="GO" id="GO:0000049">
    <property type="term" value="F:tRNA binding"/>
    <property type="evidence" value="ECO:0007669"/>
    <property type="project" value="UniProtKB-KW"/>
</dbReference>
<dbReference type="GO" id="GO:0006417">
    <property type="term" value="P:regulation of translation"/>
    <property type="evidence" value="ECO:0007669"/>
    <property type="project" value="UniProtKB-KW"/>
</dbReference>
<dbReference type="GO" id="GO:0006412">
    <property type="term" value="P:translation"/>
    <property type="evidence" value="ECO:0007669"/>
    <property type="project" value="UniProtKB-UniRule"/>
</dbReference>
<dbReference type="CDD" id="cd00403">
    <property type="entry name" value="Ribosomal_L1"/>
    <property type="match status" value="1"/>
</dbReference>
<dbReference type="FunFam" id="3.40.50.790:FF:000001">
    <property type="entry name" value="50S ribosomal protein L1"/>
    <property type="match status" value="1"/>
</dbReference>
<dbReference type="Gene3D" id="3.30.190.20">
    <property type="match status" value="1"/>
</dbReference>
<dbReference type="Gene3D" id="3.40.50.790">
    <property type="match status" value="1"/>
</dbReference>
<dbReference type="HAMAP" id="MF_01318_B">
    <property type="entry name" value="Ribosomal_uL1_B"/>
    <property type="match status" value="1"/>
</dbReference>
<dbReference type="InterPro" id="IPR005878">
    <property type="entry name" value="Ribosom_uL1_bac-type"/>
</dbReference>
<dbReference type="InterPro" id="IPR002143">
    <property type="entry name" value="Ribosomal_uL1"/>
</dbReference>
<dbReference type="InterPro" id="IPR023674">
    <property type="entry name" value="Ribosomal_uL1-like"/>
</dbReference>
<dbReference type="InterPro" id="IPR028364">
    <property type="entry name" value="Ribosomal_uL1/biogenesis"/>
</dbReference>
<dbReference type="InterPro" id="IPR016095">
    <property type="entry name" value="Ribosomal_uL1_3-a/b-sand"/>
</dbReference>
<dbReference type="InterPro" id="IPR023673">
    <property type="entry name" value="Ribosomal_uL1_CS"/>
</dbReference>
<dbReference type="NCBIfam" id="TIGR01169">
    <property type="entry name" value="rplA_bact"/>
    <property type="match status" value="1"/>
</dbReference>
<dbReference type="PANTHER" id="PTHR36427">
    <property type="entry name" value="54S RIBOSOMAL PROTEIN L1, MITOCHONDRIAL"/>
    <property type="match status" value="1"/>
</dbReference>
<dbReference type="PANTHER" id="PTHR36427:SF3">
    <property type="entry name" value="LARGE RIBOSOMAL SUBUNIT PROTEIN UL1M"/>
    <property type="match status" value="1"/>
</dbReference>
<dbReference type="Pfam" id="PF00687">
    <property type="entry name" value="Ribosomal_L1"/>
    <property type="match status" value="1"/>
</dbReference>
<dbReference type="PIRSF" id="PIRSF002155">
    <property type="entry name" value="Ribosomal_L1"/>
    <property type="match status" value="1"/>
</dbReference>
<dbReference type="SUPFAM" id="SSF56808">
    <property type="entry name" value="Ribosomal protein L1"/>
    <property type="match status" value="1"/>
</dbReference>
<dbReference type="PROSITE" id="PS01199">
    <property type="entry name" value="RIBOSOMAL_L1"/>
    <property type="match status" value="1"/>
</dbReference>
<protein>
    <recommendedName>
        <fullName evidence="1">Large ribosomal subunit protein uL1</fullName>
    </recommendedName>
    <alternativeName>
        <fullName evidence="2">50S ribosomal protein L1</fullName>
    </alternativeName>
</protein>
<organism>
    <name type="scientific">Prochlorococcus marinus (strain MIT 9313)</name>
    <dbReference type="NCBI Taxonomy" id="74547"/>
    <lineage>
        <taxon>Bacteria</taxon>
        <taxon>Bacillati</taxon>
        <taxon>Cyanobacteriota</taxon>
        <taxon>Cyanophyceae</taxon>
        <taxon>Synechococcales</taxon>
        <taxon>Prochlorococcaceae</taxon>
        <taxon>Prochlorococcus</taxon>
    </lineage>
</organism>
<accession>Q7V478</accession>